<comment type="function">
    <text evidence="1">Catalyzes the 2-thiolation of uridine at the wobble position (U34) of tRNA, leading to the formation of s(2)U34.</text>
</comment>
<comment type="catalytic activity">
    <reaction evidence="1">
        <text>S-sulfanyl-L-cysteinyl-[protein] + uridine(34) in tRNA + AH2 + ATP = 2-thiouridine(34) in tRNA + L-cysteinyl-[protein] + A + AMP + diphosphate + H(+)</text>
        <dbReference type="Rhea" id="RHEA:47032"/>
        <dbReference type="Rhea" id="RHEA-COMP:10131"/>
        <dbReference type="Rhea" id="RHEA-COMP:11726"/>
        <dbReference type="Rhea" id="RHEA-COMP:11727"/>
        <dbReference type="Rhea" id="RHEA-COMP:11728"/>
        <dbReference type="ChEBI" id="CHEBI:13193"/>
        <dbReference type="ChEBI" id="CHEBI:15378"/>
        <dbReference type="ChEBI" id="CHEBI:17499"/>
        <dbReference type="ChEBI" id="CHEBI:29950"/>
        <dbReference type="ChEBI" id="CHEBI:30616"/>
        <dbReference type="ChEBI" id="CHEBI:33019"/>
        <dbReference type="ChEBI" id="CHEBI:61963"/>
        <dbReference type="ChEBI" id="CHEBI:65315"/>
        <dbReference type="ChEBI" id="CHEBI:87170"/>
        <dbReference type="ChEBI" id="CHEBI:456215"/>
        <dbReference type="EC" id="2.8.1.13"/>
    </reaction>
</comment>
<comment type="subcellular location">
    <subcellularLocation>
        <location evidence="1">Cytoplasm</location>
    </subcellularLocation>
</comment>
<comment type="similarity">
    <text evidence="1">Belongs to the MnmA/TRMU family.</text>
</comment>
<proteinExistence type="inferred from homology"/>
<reference key="1">
    <citation type="submission" date="2006-12" db="EMBL/GenBank/DDBJ databases">
        <title>Complete sequence of Shewanella amazonensis SB2B.</title>
        <authorList>
            <consortium name="US DOE Joint Genome Institute"/>
            <person name="Copeland A."/>
            <person name="Lucas S."/>
            <person name="Lapidus A."/>
            <person name="Barry K."/>
            <person name="Detter J.C."/>
            <person name="Glavina del Rio T."/>
            <person name="Hammon N."/>
            <person name="Israni S."/>
            <person name="Dalin E."/>
            <person name="Tice H."/>
            <person name="Pitluck S."/>
            <person name="Munk A.C."/>
            <person name="Brettin T."/>
            <person name="Bruce D."/>
            <person name="Han C."/>
            <person name="Tapia R."/>
            <person name="Gilna P."/>
            <person name="Schmutz J."/>
            <person name="Larimer F."/>
            <person name="Land M."/>
            <person name="Hauser L."/>
            <person name="Kyrpides N."/>
            <person name="Mikhailova N."/>
            <person name="Fredrickson J."/>
            <person name="Richardson P."/>
        </authorList>
    </citation>
    <scope>NUCLEOTIDE SEQUENCE [LARGE SCALE GENOMIC DNA]</scope>
    <source>
        <strain>ATCC BAA-1098 / SB2B</strain>
    </source>
</reference>
<name>MNMA_SHEAM</name>
<accession>A1S7B1</accession>
<sequence length="377" mass="42057">MTSTTASPAEIAANSSKKVIVGMSGGVDSSVSAYLLKQQGYQVEGLFMKNWEEDDTDEYCAAAEDLKDAQAVCDKLGIKLHTVNFAAEYWDNVFEYFLAEYKAGRTPNPDIMCNKEIKFKAFLEFADDILDADYIAMGHYVRRRDTDGKTEMLRGIDGNKDQSYFLYTLSHEQVARSLFPVGELEKPEVRRIAEEQGLITHDKKDSTGICFIGERKFKDFLATYLPAQPGNIETPEGDIIGRHEGLMYHTLGQRKGLGIGGMKNSNDDPWYVVDKDMARNVLVVAQGHEHPRLMSKGMRVNQLHWVDRTGPADGATISVKTRYRQQDIPCTVKIIDEQTIEVLFDEPVAAVTPGQSAVFYDGEVCLGGGIIDTLIKD</sequence>
<dbReference type="EC" id="2.8.1.13" evidence="1"/>
<dbReference type="EMBL" id="CP000507">
    <property type="protein sequence ID" value="ABM00268.1"/>
    <property type="molecule type" value="Genomic_DNA"/>
</dbReference>
<dbReference type="RefSeq" id="WP_011760175.1">
    <property type="nucleotide sequence ID" value="NC_008700.1"/>
</dbReference>
<dbReference type="SMR" id="A1S7B1"/>
<dbReference type="STRING" id="326297.Sama_2062"/>
<dbReference type="KEGG" id="saz:Sama_2062"/>
<dbReference type="eggNOG" id="COG0482">
    <property type="taxonomic scope" value="Bacteria"/>
</dbReference>
<dbReference type="HOGENOM" id="CLU_035188_1_0_6"/>
<dbReference type="OrthoDB" id="9800696at2"/>
<dbReference type="Proteomes" id="UP000009175">
    <property type="component" value="Chromosome"/>
</dbReference>
<dbReference type="GO" id="GO:0005737">
    <property type="term" value="C:cytoplasm"/>
    <property type="evidence" value="ECO:0007669"/>
    <property type="project" value="UniProtKB-SubCell"/>
</dbReference>
<dbReference type="GO" id="GO:0005524">
    <property type="term" value="F:ATP binding"/>
    <property type="evidence" value="ECO:0007669"/>
    <property type="project" value="UniProtKB-KW"/>
</dbReference>
<dbReference type="GO" id="GO:0000049">
    <property type="term" value="F:tRNA binding"/>
    <property type="evidence" value="ECO:0007669"/>
    <property type="project" value="UniProtKB-KW"/>
</dbReference>
<dbReference type="GO" id="GO:0103016">
    <property type="term" value="F:tRNA-uridine 2-sulfurtransferase activity"/>
    <property type="evidence" value="ECO:0007669"/>
    <property type="project" value="UniProtKB-EC"/>
</dbReference>
<dbReference type="GO" id="GO:0002143">
    <property type="term" value="P:tRNA wobble position uridine thiolation"/>
    <property type="evidence" value="ECO:0007669"/>
    <property type="project" value="TreeGrafter"/>
</dbReference>
<dbReference type="CDD" id="cd01998">
    <property type="entry name" value="MnmA_TRMU-like"/>
    <property type="match status" value="1"/>
</dbReference>
<dbReference type="FunFam" id="2.30.30.280:FF:000001">
    <property type="entry name" value="tRNA-specific 2-thiouridylase MnmA"/>
    <property type="match status" value="1"/>
</dbReference>
<dbReference type="FunFam" id="2.40.30.10:FF:000023">
    <property type="entry name" value="tRNA-specific 2-thiouridylase MnmA"/>
    <property type="match status" value="1"/>
</dbReference>
<dbReference type="FunFam" id="3.40.50.620:FF:000004">
    <property type="entry name" value="tRNA-specific 2-thiouridylase MnmA"/>
    <property type="match status" value="1"/>
</dbReference>
<dbReference type="Gene3D" id="2.30.30.280">
    <property type="entry name" value="Adenine nucleotide alpha hydrolases-like domains"/>
    <property type="match status" value="1"/>
</dbReference>
<dbReference type="Gene3D" id="3.40.50.620">
    <property type="entry name" value="HUPs"/>
    <property type="match status" value="1"/>
</dbReference>
<dbReference type="Gene3D" id="2.40.30.10">
    <property type="entry name" value="Translation factors"/>
    <property type="match status" value="1"/>
</dbReference>
<dbReference type="HAMAP" id="MF_00144">
    <property type="entry name" value="tRNA_thiouridyl_MnmA"/>
    <property type="match status" value="1"/>
</dbReference>
<dbReference type="InterPro" id="IPR004506">
    <property type="entry name" value="MnmA-like"/>
</dbReference>
<dbReference type="InterPro" id="IPR046885">
    <property type="entry name" value="MnmA-like_C"/>
</dbReference>
<dbReference type="InterPro" id="IPR046884">
    <property type="entry name" value="MnmA-like_central"/>
</dbReference>
<dbReference type="InterPro" id="IPR023382">
    <property type="entry name" value="MnmA-like_central_sf"/>
</dbReference>
<dbReference type="InterPro" id="IPR014729">
    <property type="entry name" value="Rossmann-like_a/b/a_fold"/>
</dbReference>
<dbReference type="NCBIfam" id="NF001138">
    <property type="entry name" value="PRK00143.1"/>
    <property type="match status" value="1"/>
</dbReference>
<dbReference type="NCBIfam" id="TIGR00420">
    <property type="entry name" value="trmU"/>
    <property type="match status" value="1"/>
</dbReference>
<dbReference type="PANTHER" id="PTHR11933:SF5">
    <property type="entry name" value="MITOCHONDRIAL TRNA-SPECIFIC 2-THIOURIDYLASE 1"/>
    <property type="match status" value="1"/>
</dbReference>
<dbReference type="PANTHER" id="PTHR11933">
    <property type="entry name" value="TRNA 5-METHYLAMINOMETHYL-2-THIOURIDYLATE -METHYLTRANSFERASE"/>
    <property type="match status" value="1"/>
</dbReference>
<dbReference type="Pfam" id="PF03054">
    <property type="entry name" value="tRNA_Me_trans"/>
    <property type="match status" value="1"/>
</dbReference>
<dbReference type="Pfam" id="PF20258">
    <property type="entry name" value="tRNA_Me_trans_C"/>
    <property type="match status" value="1"/>
</dbReference>
<dbReference type="Pfam" id="PF20259">
    <property type="entry name" value="tRNA_Me_trans_M"/>
    <property type="match status" value="1"/>
</dbReference>
<dbReference type="SUPFAM" id="SSF52402">
    <property type="entry name" value="Adenine nucleotide alpha hydrolases-like"/>
    <property type="match status" value="1"/>
</dbReference>
<protein>
    <recommendedName>
        <fullName evidence="1">tRNA-specific 2-thiouridylase MnmA</fullName>
        <ecNumber evidence="1">2.8.1.13</ecNumber>
    </recommendedName>
</protein>
<keyword id="KW-0067">ATP-binding</keyword>
<keyword id="KW-0963">Cytoplasm</keyword>
<keyword id="KW-1015">Disulfide bond</keyword>
<keyword id="KW-0547">Nucleotide-binding</keyword>
<keyword id="KW-1185">Reference proteome</keyword>
<keyword id="KW-0694">RNA-binding</keyword>
<keyword id="KW-0808">Transferase</keyword>
<keyword id="KW-0819">tRNA processing</keyword>
<keyword id="KW-0820">tRNA-binding</keyword>
<gene>
    <name evidence="1" type="primary">mnmA</name>
    <name type="ordered locus">Sama_2062</name>
</gene>
<organism>
    <name type="scientific">Shewanella amazonensis (strain ATCC BAA-1098 / SB2B)</name>
    <dbReference type="NCBI Taxonomy" id="326297"/>
    <lineage>
        <taxon>Bacteria</taxon>
        <taxon>Pseudomonadati</taxon>
        <taxon>Pseudomonadota</taxon>
        <taxon>Gammaproteobacteria</taxon>
        <taxon>Alteromonadales</taxon>
        <taxon>Shewanellaceae</taxon>
        <taxon>Shewanella</taxon>
    </lineage>
</organism>
<feature type="chain" id="PRO_0000349788" description="tRNA-specific 2-thiouridylase MnmA">
    <location>
        <begin position="1"/>
        <end position="377"/>
    </location>
</feature>
<feature type="region of interest" description="Interaction with target base in tRNA" evidence="1">
    <location>
        <begin position="108"/>
        <end position="110"/>
    </location>
</feature>
<feature type="region of interest" description="Interaction with tRNA" evidence="1">
    <location>
        <begin position="160"/>
        <end position="162"/>
    </location>
</feature>
<feature type="region of interest" description="Interaction with tRNA" evidence="1">
    <location>
        <begin position="322"/>
        <end position="323"/>
    </location>
</feature>
<feature type="active site" description="Nucleophile" evidence="1">
    <location>
        <position position="113"/>
    </location>
</feature>
<feature type="active site" description="Cysteine persulfide intermediate" evidence="1">
    <location>
        <position position="210"/>
    </location>
</feature>
<feature type="binding site" evidence="1">
    <location>
        <begin position="22"/>
        <end position="29"/>
    </location>
    <ligand>
        <name>ATP</name>
        <dbReference type="ChEBI" id="CHEBI:30616"/>
    </ligand>
</feature>
<feature type="binding site" evidence="1">
    <location>
        <position position="48"/>
    </location>
    <ligand>
        <name>ATP</name>
        <dbReference type="ChEBI" id="CHEBI:30616"/>
    </ligand>
</feature>
<feature type="binding site" evidence="1">
    <location>
        <position position="138"/>
    </location>
    <ligand>
        <name>ATP</name>
        <dbReference type="ChEBI" id="CHEBI:30616"/>
    </ligand>
</feature>
<feature type="site" description="Interaction with tRNA" evidence="1">
    <location>
        <position position="139"/>
    </location>
</feature>
<feature type="site" description="Interaction with tRNA" evidence="1">
    <location>
        <position position="355"/>
    </location>
</feature>
<feature type="disulfide bond" description="Alternate" evidence="1">
    <location>
        <begin position="113"/>
        <end position="210"/>
    </location>
</feature>
<evidence type="ECO:0000255" key="1">
    <source>
        <dbReference type="HAMAP-Rule" id="MF_00144"/>
    </source>
</evidence>